<organism>
    <name type="scientific">Thermosynechococcus vestitus (strain NIES-2133 / IAM M-273 / BP-1)</name>
    <dbReference type="NCBI Taxonomy" id="197221"/>
    <lineage>
        <taxon>Bacteria</taxon>
        <taxon>Bacillati</taxon>
        <taxon>Cyanobacteriota</taxon>
        <taxon>Cyanophyceae</taxon>
        <taxon>Acaryochloridales</taxon>
        <taxon>Thermosynechococcaceae</taxon>
        <taxon>Thermosynechococcus</taxon>
    </lineage>
</organism>
<name>PSBD_THEVB</name>
<proteinExistence type="evidence at protein level"/>
<feature type="chain" id="PRO_0000359603" description="Photosystem II D2 protein">
    <location>
        <begin position="1"/>
        <end position="352"/>
    </location>
</feature>
<feature type="topological domain" description="Cytoplasmic" evidence="11 23">
    <location>
        <begin position="1"/>
        <end position="31"/>
    </location>
</feature>
<feature type="transmembrane region" description="Helical" evidence="11 23">
    <location>
        <begin position="32"/>
        <end position="53"/>
    </location>
</feature>
<feature type="topological domain" description="Lumenal" evidence="11 23">
    <location>
        <begin position="54"/>
        <end position="108"/>
    </location>
</feature>
<feature type="transmembrane region" description="Helical" evidence="11 23">
    <location>
        <begin position="109"/>
        <end position="131"/>
    </location>
</feature>
<feature type="topological domain" description="Cytoplasmic" evidence="11 23">
    <location>
        <begin position="132"/>
        <end position="140"/>
    </location>
</feature>
<feature type="transmembrane region" description="Helical" evidence="11 23">
    <location>
        <begin position="141"/>
        <end position="160"/>
    </location>
</feature>
<feature type="topological domain" description="Lumenal" evidence="11 23">
    <location>
        <begin position="161"/>
        <end position="193"/>
    </location>
</feature>
<feature type="transmembrane region" description="Helical" evidence="11 23">
    <location>
        <begin position="194"/>
        <end position="217"/>
    </location>
</feature>
<feature type="topological domain" description="Cytoplasmic" evidence="11 23">
    <location>
        <begin position="218"/>
        <end position="265"/>
    </location>
</feature>
<feature type="transmembrane region" description="Helical" evidence="11 23">
    <location>
        <begin position="266"/>
        <end position="288"/>
    </location>
</feature>
<feature type="topological domain" description="Lumenal" evidence="11 23">
    <location>
        <begin position="289"/>
        <end position="352"/>
    </location>
</feature>
<feature type="binding site" description="axial binding residue" evidence="1 3 4 13 14 15 16 17 20">
    <location>
        <position position="117"/>
    </location>
    <ligand>
        <name>chlorophyll a</name>
        <dbReference type="ChEBI" id="CHEBI:58416"/>
        <label>ChlzD2</label>
    </ligand>
    <ligandPart>
        <name>Mg</name>
        <dbReference type="ChEBI" id="CHEBI:25107"/>
    </ligandPart>
</feature>
<feature type="binding site" evidence="1 3 13 19">
    <location>
        <position position="129"/>
    </location>
    <ligand>
        <name>pheophytin a</name>
        <dbReference type="ChEBI" id="CHEBI:136840"/>
        <label>D2</label>
    </ligand>
</feature>
<feature type="binding site" evidence="1 3 4 14 15 19">
    <location>
        <position position="142"/>
    </location>
    <ligand>
        <name>pheophytin a</name>
        <dbReference type="ChEBI" id="CHEBI:136840"/>
        <label>D2</label>
    </ligand>
</feature>
<feature type="binding site" description="axial binding residue" evidence="1 3 4 13 14 15 16 17 19 20">
    <location>
        <position position="197"/>
    </location>
    <ligand>
        <name>chlorophyll a</name>
        <dbReference type="ChEBI" id="CHEBI:58416"/>
        <label>PD2</label>
    </ligand>
    <ligandPart>
        <name>Mg</name>
        <dbReference type="ChEBI" id="CHEBI:25107"/>
    </ligandPart>
</feature>
<feature type="binding site" evidence="1 3 4 13 14 15 16 17 18 19">
    <location>
        <position position="214"/>
    </location>
    <ligand>
        <name>a plastoquinone</name>
        <dbReference type="ChEBI" id="CHEBI:17757"/>
        <label>Q(A)</label>
    </ligand>
</feature>
<feature type="binding site" evidence="1 3 4 13 14 15 16 17 19 20">
    <location>
        <position position="214"/>
    </location>
    <ligand>
        <name>Fe cation</name>
        <dbReference type="ChEBI" id="CHEBI:24875"/>
        <note>ligand shared with heterodimeric partner</note>
    </ligand>
</feature>
<feature type="binding site" evidence="1 3 4 13 14 15 16 17 18 19">
    <location>
        <position position="261"/>
    </location>
    <ligand>
        <name>a plastoquinone</name>
        <dbReference type="ChEBI" id="CHEBI:17757"/>
        <label>Q(A)</label>
    </ligand>
</feature>
<feature type="binding site" evidence="1 3 4 13 14 15 16 17 18 19 20">
    <location>
        <position position="268"/>
    </location>
    <ligand>
        <name>Fe cation</name>
        <dbReference type="ChEBI" id="CHEBI:24875"/>
        <note>ligand shared with heterodimeric partner</note>
    </ligand>
</feature>
<feature type="helix" evidence="26">
    <location>
        <begin position="14"/>
        <end position="22"/>
    </location>
</feature>
<feature type="strand" evidence="24">
    <location>
        <begin position="26"/>
        <end position="28"/>
    </location>
</feature>
<feature type="helix" evidence="26">
    <location>
        <begin position="31"/>
        <end position="54"/>
    </location>
</feature>
<feature type="helix" evidence="26">
    <location>
        <begin position="58"/>
        <end position="61"/>
    </location>
</feature>
<feature type="helix" evidence="26">
    <location>
        <begin position="67"/>
        <end position="69"/>
    </location>
</feature>
<feature type="turn" evidence="26">
    <location>
        <begin position="73"/>
        <end position="75"/>
    </location>
</feature>
<feature type="helix" evidence="26">
    <location>
        <begin position="83"/>
        <end position="85"/>
    </location>
</feature>
<feature type="strand" evidence="25">
    <location>
        <begin position="92"/>
        <end position="94"/>
    </location>
</feature>
<feature type="turn" evidence="26">
    <location>
        <begin position="95"/>
        <end position="99"/>
    </location>
</feature>
<feature type="helix" evidence="26">
    <location>
        <begin position="101"/>
        <end position="107"/>
    </location>
</feature>
<feature type="helix" evidence="26">
    <location>
        <begin position="109"/>
        <end position="136"/>
    </location>
</feature>
<feature type="helix" evidence="26">
    <location>
        <begin position="141"/>
        <end position="157"/>
    </location>
</feature>
<feature type="helix" evidence="26">
    <location>
        <begin position="159"/>
        <end position="163"/>
    </location>
</feature>
<feature type="strand" evidence="26">
    <location>
        <begin position="164"/>
        <end position="166"/>
    </location>
</feature>
<feature type="helix" evidence="26">
    <location>
        <begin position="167"/>
        <end position="169"/>
    </location>
</feature>
<feature type="helix" evidence="26">
    <location>
        <begin position="175"/>
        <end position="189"/>
    </location>
</feature>
<feature type="helix" evidence="26">
    <location>
        <begin position="191"/>
        <end position="193"/>
    </location>
</feature>
<feature type="helix" evidence="26">
    <location>
        <begin position="195"/>
        <end position="220"/>
    </location>
</feature>
<feature type="strand" evidence="26">
    <location>
        <begin position="221"/>
        <end position="223"/>
    </location>
</feature>
<feature type="strand" evidence="27">
    <location>
        <begin position="226"/>
        <end position="231"/>
    </location>
</feature>
<feature type="helix" evidence="27">
    <location>
        <begin position="232"/>
        <end position="234"/>
    </location>
</feature>
<feature type="helix" evidence="25">
    <location>
        <begin position="236"/>
        <end position="238"/>
    </location>
</feature>
<feature type="strand" evidence="25">
    <location>
        <begin position="240"/>
        <end position="244"/>
    </location>
</feature>
<feature type="helix" evidence="26">
    <location>
        <begin position="246"/>
        <end position="257"/>
    </location>
</feature>
<feature type="helix" evidence="26">
    <location>
        <begin position="264"/>
        <end position="290"/>
    </location>
</feature>
<feature type="helix" evidence="26">
    <location>
        <begin position="299"/>
        <end position="307"/>
    </location>
</feature>
<feature type="helix" evidence="26">
    <location>
        <begin position="314"/>
        <end position="333"/>
    </location>
</feature>
<feature type="helix" evidence="26">
    <location>
        <begin position="335"/>
        <end position="337"/>
    </location>
</feature>
<feature type="helix" evidence="26">
    <location>
        <begin position="343"/>
        <end position="345"/>
    </location>
</feature>
<feature type="helix" evidence="25">
    <location>
        <begin position="349"/>
        <end position="351"/>
    </location>
</feature>
<accession>Q8CM25</accession>
<protein>
    <recommendedName>
        <fullName evidence="1">Photosystem II D2 protein</fullName>
        <shortName evidence="1">PSII D2 protein</shortName>
        <ecNumber evidence="1 5 9">1.10.3.9</ecNumber>
    </recommendedName>
    <alternativeName>
        <fullName evidence="1">Photosystem II Q(A) protein</fullName>
    </alternativeName>
</protein>
<comment type="function">
    <text evidence="1 5 6 9">Photosystem II (PSII) is a light-driven water:plastoquinone oxidoreductase that uses light energy to abstract electrons from H(2)O, generating O(2) and a proton gradient subsequently used for ATP formation. It consists of a core antenna complex that captures photons, and an electron transfer chain that converts photonic excitation into a charge separation. The D1/D2 (PsbA/PsbD) reaction center heterodimer binds P680, the primary electron donor of PSII as well as several subsequent electron acceptors. D2 is needed for assembly of a stable PSII complex.</text>
</comment>
<comment type="catalytic activity">
    <reaction evidence="1 5 9">
        <text>2 a plastoquinone + 4 hnu + 2 H2O = 2 a plastoquinol + O2</text>
        <dbReference type="Rhea" id="RHEA:36359"/>
        <dbReference type="Rhea" id="RHEA-COMP:9561"/>
        <dbReference type="Rhea" id="RHEA-COMP:9562"/>
        <dbReference type="ChEBI" id="CHEBI:15377"/>
        <dbReference type="ChEBI" id="CHEBI:15379"/>
        <dbReference type="ChEBI" id="CHEBI:17757"/>
        <dbReference type="ChEBI" id="CHEBI:30212"/>
        <dbReference type="ChEBI" id="CHEBI:62192"/>
        <dbReference type="EC" id="1.10.3.9"/>
    </reaction>
</comment>
<comment type="cofactor">
    <text evidence="1 2 3 4 5 6 9 10 12">The D1/D2 heterodimer binds P680, chlorophylls that are the primary electron donor of PSII, and subsequent electron acceptors. It shares a non-heme iron and each subunit binds pheophytin, quinone, additional chlorophylls, carotenoids and lipids. There is also a Cl(-1) ion associated with D1 and D2, which is required for oxygen evolution (PubMed:19219048, PubMed:21367867). PSII binds additional chlorophylls, carotenoids and specific lipids.</text>
</comment>
<comment type="subunit">
    <text evidence="1 2 3 4 5 6 7 8 9 10 11 12">PSII is composed of 1 copy each of membrane proteins PsbA, PsbB, PsbC, PsbD, PsbE, PsbF, PsbH, PsbI, PsbJ, PsbK, PsbL, PsbM, PsbT, PsbX, PsbY, PsbZ, Psb30/Ycf12, peripheral proteins PsbO, CyanoQ (PsbQ), PsbU, PsbV and a large number of cofactors. It forms dimeric complexes. Part of a photosystem II (PSII) assembly intermediate complex PSII-I; crystallized from a strain deleted of psbJ, it forms monomeric PSII before addition of the oxygen evolving complex. PSII-I includes 3 assembly factors not found in mature PSII (Psb27, Psb28 and Psb34) (PubMed:33846594).</text>
</comment>
<comment type="subcellular location">
    <subcellularLocation>
        <location evidence="1 2 3 4 5 6 7 8 9 10 11 12">Cellular thylakoid membrane</location>
        <topology evidence="1 2 3 4 5 6 7 8 9 10 11 12">Multi-pass membrane protein</topology>
    </subcellularLocation>
</comment>
<comment type="mass spectrometry"/>
<comment type="miscellaneous">
    <text evidence="1 3 4">2 of the reaction center chlorophylls (ChlD1 and ChlD2) are entirely coordinated by water.</text>
</comment>
<comment type="similarity">
    <text evidence="1">Belongs to the reaction center PufL/M/PsbA/D family.</text>
</comment>
<comment type="caution">
    <text evidence="3 4 13 14 15 16 17 18 19 20">According to (Ref.2, PubMed:22665786, PubMed:23413188, PubMed:25006873) there are no direct protein ligands to pheophytin D2, whereas (PubMed:14764885, PubMed:16355230, PubMed:19219048, PubMed:20558739, PubMed:21367867, PubMed:25043005) show 1 or 2 direct ligands.</text>
</comment>
<gene>
    <name evidence="1" type="primary">psbD1</name>
    <name type="ordered locus">tlr0455</name>
</gene>
<gene>
    <name evidence="1" type="primary">psbD2</name>
    <name type="ordered locus">tlr1630</name>
</gene>
<keyword id="KW-0002">3D-structure</keyword>
<keyword id="KW-0148">Chlorophyll</keyword>
<keyword id="KW-0157">Chromophore</keyword>
<keyword id="KW-0249">Electron transport</keyword>
<keyword id="KW-0408">Iron</keyword>
<keyword id="KW-0460">Magnesium</keyword>
<keyword id="KW-0472">Membrane</keyword>
<keyword id="KW-0479">Metal-binding</keyword>
<keyword id="KW-0560">Oxidoreductase</keyword>
<keyword id="KW-0602">Photosynthesis</keyword>
<keyword id="KW-0604">Photosystem II</keyword>
<keyword id="KW-1185">Reference proteome</keyword>
<keyword id="KW-0793">Thylakoid</keyword>
<keyword id="KW-0812">Transmembrane</keyword>
<keyword id="KW-1133">Transmembrane helix</keyword>
<keyword id="KW-0813">Transport</keyword>
<evidence type="ECO:0000255" key="1">
    <source>
        <dbReference type="HAMAP-Rule" id="MF_01383"/>
    </source>
</evidence>
<evidence type="ECO:0000269" key="2">
    <source>
    </source>
</evidence>
<evidence type="ECO:0000269" key="3">
    <source>
    </source>
</evidence>
<evidence type="ECO:0000269" key="4">
    <source>
    </source>
</evidence>
<evidence type="ECO:0000269" key="5">
    <source>
    </source>
</evidence>
<evidence type="ECO:0000269" key="6">
    <source>
    </source>
</evidence>
<evidence type="ECO:0000269" key="7">
    <source>
    </source>
</evidence>
<evidence type="ECO:0000269" key="8">
    <source>
    </source>
</evidence>
<evidence type="ECO:0000269" key="9">
    <source>
    </source>
</evidence>
<evidence type="ECO:0000269" key="10">
    <source>
    </source>
</evidence>
<evidence type="ECO:0000269" key="11">
    <source>
    </source>
</evidence>
<evidence type="ECO:0000269" key="12">
    <source ref="2"/>
</evidence>
<evidence type="ECO:0000303" key="13">
    <source>
    </source>
</evidence>
<evidence type="ECO:0000303" key="14">
    <source>
    </source>
</evidence>
<evidence type="ECO:0000303" key="15">
    <source>
    </source>
</evidence>
<evidence type="ECO:0000303" key="16">
    <source>
    </source>
</evidence>
<evidence type="ECO:0000303" key="17">
    <source>
    </source>
</evidence>
<evidence type="ECO:0000303" key="18">
    <source>
    </source>
</evidence>
<evidence type="ECO:0000303" key="19">
    <source>
    </source>
</evidence>
<evidence type="ECO:0000303" key="20">
    <source ref="2"/>
</evidence>
<evidence type="ECO:0007744" key="21">
    <source>
        <dbReference type="PDB" id="7NHO"/>
    </source>
</evidence>
<evidence type="ECO:0007744" key="22">
    <source>
        <dbReference type="PDB" id="7NHP"/>
    </source>
</evidence>
<evidence type="ECO:0007744" key="23">
    <source>
        <dbReference type="PDB" id="7NHQ"/>
    </source>
</evidence>
<evidence type="ECO:0007829" key="24">
    <source>
        <dbReference type="PDB" id="1W5C"/>
    </source>
</evidence>
<evidence type="ECO:0007829" key="25">
    <source>
        <dbReference type="PDB" id="7NHQ"/>
    </source>
</evidence>
<evidence type="ECO:0007829" key="26">
    <source>
        <dbReference type="PDB" id="7YQ2"/>
    </source>
</evidence>
<evidence type="ECO:0007829" key="27">
    <source>
        <dbReference type="PDB" id="8F4C"/>
    </source>
</evidence>
<sequence>MTIAIGRAPAERGWFDILDDWLKRDRFVFVGWSGILLFPCAYLALGGWLTGTTFVTSWYTHGLASSYLEGCNFLTVAVSTPANSMGHSLLLLWGPEAQGDFTRWCQLGGLWTFIALHGAFGLIGFMLRQFEIARLVGVRPYNAIAFSAPIAVFVSVFLIYPLGQSSWFFAPSFGVAAIFRFLLFFQGFHNWTLNPFHMMGVAGVLGGALLCAIHGATVENTLFQDGEGASTFRAFNPTQAEETYSMVTANRFWSQIFGIAFSNKRWLHFFMLFVPVTGLWMSAIGVVGLALNLRSYDFISQEIRAAEDPEFETFYTKNLLLNEGIRAWMAPQDQPHENFVFPEEVLPRGNAL</sequence>
<dbReference type="EC" id="1.10.3.9" evidence="1 5 9"/>
<dbReference type="EMBL" id="BA000039">
    <property type="protein sequence ID" value="BAC08007.1"/>
    <property type="molecule type" value="Genomic_DNA"/>
</dbReference>
<dbReference type="EMBL" id="BA000039">
    <property type="protein sequence ID" value="BAC09182.1"/>
    <property type="molecule type" value="Genomic_DNA"/>
</dbReference>
<dbReference type="RefSeq" id="NP_681245.1">
    <property type="nucleotide sequence ID" value="NC_004113.1"/>
</dbReference>
<dbReference type="RefSeq" id="NP_682420.1">
    <property type="nucleotide sequence ID" value="NC_004113.1"/>
</dbReference>
<dbReference type="RefSeq" id="WP_011056308.1">
    <property type="nucleotide sequence ID" value="NC_004113.1"/>
</dbReference>
<dbReference type="PDB" id="1S5L">
    <property type="method" value="X-ray"/>
    <property type="resolution" value="3.50 A"/>
    <property type="chains" value="D/d=1-352"/>
</dbReference>
<dbReference type="PDB" id="1W5C">
    <property type="method" value="X-ray"/>
    <property type="resolution" value="3.20 A"/>
    <property type="chains" value="D/J=1-352"/>
</dbReference>
<dbReference type="PDB" id="2AXT">
    <property type="method" value="X-ray"/>
    <property type="resolution" value="3.00 A"/>
    <property type="chains" value="D/d=1-352"/>
</dbReference>
<dbReference type="PDB" id="3KZI">
    <property type="method" value="X-ray"/>
    <property type="resolution" value="3.60 A"/>
    <property type="chains" value="D=1-352"/>
</dbReference>
<dbReference type="PDB" id="4FBY">
    <property type="method" value="X-ray"/>
    <property type="resolution" value="6.56 A"/>
    <property type="chains" value="D/Q=1-352"/>
</dbReference>
<dbReference type="PDB" id="4IXQ">
    <property type="method" value="X-ray"/>
    <property type="resolution" value="5.70 A"/>
    <property type="chains" value="D/d=1-352"/>
</dbReference>
<dbReference type="PDB" id="4IXR">
    <property type="method" value="X-ray"/>
    <property type="resolution" value="5.90 A"/>
    <property type="chains" value="D/d=1-352"/>
</dbReference>
<dbReference type="PDB" id="4PBU">
    <property type="method" value="X-ray"/>
    <property type="resolution" value="5.00 A"/>
    <property type="chains" value="D/d=11-352"/>
</dbReference>
<dbReference type="PDB" id="4PJ0">
    <property type="method" value="X-ray"/>
    <property type="resolution" value="2.44 A"/>
    <property type="chains" value="D/d=1-352"/>
</dbReference>
<dbReference type="PDB" id="4RVY">
    <property type="method" value="X-ray"/>
    <property type="resolution" value="5.50 A"/>
    <property type="chains" value="D/d=11-352"/>
</dbReference>
<dbReference type="PDB" id="4TNH">
    <property type="method" value="X-ray"/>
    <property type="resolution" value="4.90 A"/>
    <property type="chains" value="D/d=1-352"/>
</dbReference>
<dbReference type="PDB" id="4TNI">
    <property type="method" value="X-ray"/>
    <property type="resolution" value="4.60 A"/>
    <property type="chains" value="D/d=1-352"/>
</dbReference>
<dbReference type="PDB" id="4TNJ">
    <property type="method" value="X-ray"/>
    <property type="resolution" value="4.50 A"/>
    <property type="chains" value="D/d=1-352"/>
</dbReference>
<dbReference type="PDB" id="4TNK">
    <property type="method" value="X-ray"/>
    <property type="resolution" value="5.20 A"/>
    <property type="chains" value="D/d=1-352"/>
</dbReference>
<dbReference type="PDB" id="4V62">
    <property type="method" value="X-ray"/>
    <property type="resolution" value="2.90 A"/>
    <property type="chains" value="AD/BD=1-352"/>
</dbReference>
<dbReference type="PDB" id="4V82">
    <property type="method" value="X-ray"/>
    <property type="resolution" value="3.20 A"/>
    <property type="chains" value="AD/BD=1-352"/>
</dbReference>
<dbReference type="PDB" id="5E79">
    <property type="method" value="X-ray"/>
    <property type="resolution" value="3.50 A"/>
    <property type="chains" value="D/d=11-352"/>
</dbReference>
<dbReference type="PDB" id="5E7C">
    <property type="method" value="X-ray"/>
    <property type="resolution" value="4.50 A"/>
    <property type="chains" value="D/d=11-352"/>
</dbReference>
<dbReference type="PDB" id="5H2F">
    <property type="method" value="X-ray"/>
    <property type="resolution" value="2.20 A"/>
    <property type="chains" value="D/d=11-352"/>
</dbReference>
<dbReference type="PDB" id="5KAF">
    <property type="method" value="X-ray"/>
    <property type="resolution" value="3.00 A"/>
    <property type="chains" value="D/d=1-352"/>
</dbReference>
<dbReference type="PDB" id="5KAI">
    <property type="method" value="X-ray"/>
    <property type="resolution" value="2.80 A"/>
    <property type="chains" value="D/d=1-352"/>
</dbReference>
<dbReference type="PDB" id="5MX2">
    <property type="method" value="X-ray"/>
    <property type="resolution" value="2.20 A"/>
    <property type="chains" value="D/d=1-352"/>
</dbReference>
<dbReference type="PDB" id="5TIS">
    <property type="method" value="X-ray"/>
    <property type="resolution" value="2.25 A"/>
    <property type="chains" value="D/d=1-352"/>
</dbReference>
<dbReference type="PDB" id="5ZZN">
    <property type="method" value="X-ray"/>
    <property type="resolution" value="2.10 A"/>
    <property type="chains" value="D/d=11-352"/>
</dbReference>
<dbReference type="PDB" id="6DHE">
    <property type="method" value="X-ray"/>
    <property type="resolution" value="2.05 A"/>
    <property type="chains" value="D/d=12-352"/>
</dbReference>
<dbReference type="PDB" id="6DHF">
    <property type="method" value="X-ray"/>
    <property type="resolution" value="2.08 A"/>
    <property type="chains" value="D/d=12-352"/>
</dbReference>
<dbReference type="PDB" id="6DHG">
    <property type="method" value="X-ray"/>
    <property type="resolution" value="2.50 A"/>
    <property type="chains" value="D/d=12-352"/>
</dbReference>
<dbReference type="PDB" id="6DHH">
    <property type="method" value="X-ray"/>
    <property type="resolution" value="2.20 A"/>
    <property type="chains" value="D/d=12-352"/>
</dbReference>
<dbReference type="PDB" id="6DHO">
    <property type="method" value="X-ray"/>
    <property type="resolution" value="2.07 A"/>
    <property type="chains" value="D/d=12-352"/>
</dbReference>
<dbReference type="PDB" id="6DHP">
    <property type="method" value="X-ray"/>
    <property type="resolution" value="2.04 A"/>
    <property type="chains" value="D/d=12-352"/>
</dbReference>
<dbReference type="PDB" id="6W1O">
    <property type="method" value="X-ray"/>
    <property type="resolution" value="2.08 A"/>
    <property type="chains" value="D/d=1-352"/>
</dbReference>
<dbReference type="PDB" id="6W1P">
    <property type="method" value="X-ray"/>
    <property type="resolution" value="2.26 A"/>
    <property type="chains" value="D/d=1-352"/>
</dbReference>
<dbReference type="PDB" id="6W1Q">
    <property type="method" value="X-ray"/>
    <property type="resolution" value="2.27 A"/>
    <property type="chains" value="D/d=1-352"/>
</dbReference>
<dbReference type="PDB" id="6W1R">
    <property type="method" value="X-ray"/>
    <property type="resolution" value="2.23 A"/>
    <property type="chains" value="D/d=1-352"/>
</dbReference>
<dbReference type="PDB" id="6W1T">
    <property type="method" value="X-ray"/>
    <property type="resolution" value="2.01 A"/>
    <property type="chains" value="D/d=1-352"/>
</dbReference>
<dbReference type="PDB" id="6W1U">
    <property type="method" value="X-ray"/>
    <property type="resolution" value="2.09 A"/>
    <property type="chains" value="D/d=1-352"/>
</dbReference>
<dbReference type="PDB" id="6W1V">
    <property type="method" value="X-ray"/>
    <property type="resolution" value="2.09 A"/>
    <property type="chains" value="D/d=1-352"/>
</dbReference>
<dbReference type="PDB" id="7NHO">
    <property type="method" value="EM"/>
    <property type="resolution" value="2.66 A"/>
    <property type="chains" value="D=1-352"/>
</dbReference>
<dbReference type="PDB" id="7NHP">
    <property type="method" value="EM"/>
    <property type="resolution" value="2.72 A"/>
    <property type="chains" value="D=1-352"/>
</dbReference>
<dbReference type="PDB" id="7NHQ">
    <property type="method" value="EM"/>
    <property type="resolution" value="2.68 A"/>
    <property type="chains" value="D=1-352"/>
</dbReference>
<dbReference type="PDB" id="7RF1">
    <property type="method" value="X-ray"/>
    <property type="resolution" value="1.89 A"/>
    <property type="chains" value="D/d=1-352"/>
</dbReference>
<dbReference type="PDB" id="7RF2">
    <property type="method" value="X-ray"/>
    <property type="resolution" value="2.08 A"/>
    <property type="chains" value="D/d=1-352"/>
</dbReference>
<dbReference type="PDB" id="7RF3">
    <property type="method" value="X-ray"/>
    <property type="resolution" value="2.26 A"/>
    <property type="chains" value="D/d=1-352"/>
</dbReference>
<dbReference type="PDB" id="7RF4">
    <property type="method" value="X-ray"/>
    <property type="resolution" value="2.27 A"/>
    <property type="chains" value="D/d=1-352"/>
</dbReference>
<dbReference type="PDB" id="7RF5">
    <property type="method" value="X-ray"/>
    <property type="resolution" value="2.23 A"/>
    <property type="chains" value="D/d=1-352"/>
</dbReference>
<dbReference type="PDB" id="7RF6">
    <property type="method" value="X-ray"/>
    <property type="resolution" value="2.01 A"/>
    <property type="chains" value="D/d=1-352"/>
</dbReference>
<dbReference type="PDB" id="7RF7">
    <property type="method" value="X-ray"/>
    <property type="resolution" value="2.09 A"/>
    <property type="chains" value="D/d=1-352"/>
</dbReference>
<dbReference type="PDB" id="7RF8">
    <property type="method" value="X-ray"/>
    <property type="resolution" value="2.09 A"/>
    <property type="chains" value="D/d=1-352"/>
</dbReference>
<dbReference type="PDB" id="7YQ2">
    <property type="method" value="X-ray"/>
    <property type="resolution" value="1.90 A"/>
    <property type="chains" value="D/d=1-352"/>
</dbReference>
<dbReference type="PDB" id="7YQ7">
    <property type="method" value="X-ray"/>
    <property type="resolution" value="1.90 A"/>
    <property type="chains" value="D/d=1-352"/>
</dbReference>
<dbReference type="PDB" id="8EZ5">
    <property type="method" value="X-ray"/>
    <property type="resolution" value="2.09 A"/>
    <property type="chains" value="D/d=1-352"/>
</dbReference>
<dbReference type="PDB" id="8F4C">
    <property type="method" value="X-ray"/>
    <property type="resolution" value="2.00 A"/>
    <property type="chains" value="D/d=1-352"/>
</dbReference>
<dbReference type="PDB" id="8F4D">
    <property type="method" value="X-ray"/>
    <property type="resolution" value="2.15 A"/>
    <property type="chains" value="D/d=1-352"/>
</dbReference>
<dbReference type="PDB" id="8F4E">
    <property type="method" value="X-ray"/>
    <property type="resolution" value="2.09 A"/>
    <property type="chains" value="D/d=1-352"/>
</dbReference>
<dbReference type="PDB" id="8F4F">
    <property type="method" value="X-ray"/>
    <property type="resolution" value="2.03 A"/>
    <property type="chains" value="D/d=1-352"/>
</dbReference>
<dbReference type="PDB" id="8F4G">
    <property type="method" value="X-ray"/>
    <property type="resolution" value="2.03 A"/>
    <property type="chains" value="D/d=1-352"/>
</dbReference>
<dbReference type="PDB" id="8F4H">
    <property type="method" value="X-ray"/>
    <property type="resolution" value="2.10 A"/>
    <property type="chains" value="D/d=1-352"/>
</dbReference>
<dbReference type="PDB" id="8F4I">
    <property type="method" value="X-ray"/>
    <property type="resolution" value="2.00 A"/>
    <property type="chains" value="D/d=1-352"/>
</dbReference>
<dbReference type="PDB" id="8F4J">
    <property type="method" value="X-ray"/>
    <property type="resolution" value="2.00 A"/>
    <property type="chains" value="D/d=1-352"/>
</dbReference>
<dbReference type="PDB" id="8F4K">
    <property type="method" value="X-ray"/>
    <property type="resolution" value="2.16 A"/>
    <property type="chains" value="D/d=1-352"/>
</dbReference>
<dbReference type="PDB" id="9EVX">
    <property type="method" value="EM"/>
    <property type="resolution" value="1.71 A"/>
    <property type="chains" value="D/d=1-352"/>
</dbReference>
<dbReference type="PDBsum" id="1S5L"/>
<dbReference type="PDBsum" id="1W5C"/>
<dbReference type="PDBsum" id="2AXT"/>
<dbReference type="PDBsum" id="3KZI"/>
<dbReference type="PDBsum" id="4FBY"/>
<dbReference type="PDBsum" id="4IXQ"/>
<dbReference type="PDBsum" id="4IXR"/>
<dbReference type="PDBsum" id="4PBU"/>
<dbReference type="PDBsum" id="4PJ0"/>
<dbReference type="PDBsum" id="4RVY"/>
<dbReference type="PDBsum" id="4TNH"/>
<dbReference type="PDBsum" id="4TNI"/>
<dbReference type="PDBsum" id="4TNJ"/>
<dbReference type="PDBsum" id="4TNK"/>
<dbReference type="PDBsum" id="4V62"/>
<dbReference type="PDBsum" id="4V82"/>
<dbReference type="PDBsum" id="5E79"/>
<dbReference type="PDBsum" id="5E7C"/>
<dbReference type="PDBsum" id="5H2F"/>
<dbReference type="PDBsum" id="5KAF"/>
<dbReference type="PDBsum" id="5KAI"/>
<dbReference type="PDBsum" id="5MX2"/>
<dbReference type="PDBsum" id="5TIS"/>
<dbReference type="PDBsum" id="5ZZN"/>
<dbReference type="PDBsum" id="6DHE"/>
<dbReference type="PDBsum" id="6DHF"/>
<dbReference type="PDBsum" id="6DHG"/>
<dbReference type="PDBsum" id="6DHH"/>
<dbReference type="PDBsum" id="6DHO"/>
<dbReference type="PDBsum" id="6DHP"/>
<dbReference type="PDBsum" id="6W1O"/>
<dbReference type="PDBsum" id="6W1P"/>
<dbReference type="PDBsum" id="6W1Q"/>
<dbReference type="PDBsum" id="6W1R"/>
<dbReference type="PDBsum" id="6W1T"/>
<dbReference type="PDBsum" id="6W1U"/>
<dbReference type="PDBsum" id="6W1V"/>
<dbReference type="PDBsum" id="7NHO"/>
<dbReference type="PDBsum" id="7NHP"/>
<dbReference type="PDBsum" id="7NHQ"/>
<dbReference type="PDBsum" id="7RF1"/>
<dbReference type="PDBsum" id="7RF2"/>
<dbReference type="PDBsum" id="7RF3"/>
<dbReference type="PDBsum" id="7RF4"/>
<dbReference type="PDBsum" id="7RF5"/>
<dbReference type="PDBsum" id="7RF6"/>
<dbReference type="PDBsum" id="7RF7"/>
<dbReference type="PDBsum" id="7RF8"/>
<dbReference type="PDBsum" id="7YQ2"/>
<dbReference type="PDBsum" id="7YQ7"/>
<dbReference type="PDBsum" id="8EZ5"/>
<dbReference type="PDBsum" id="8F4C"/>
<dbReference type="PDBsum" id="8F4D"/>
<dbReference type="PDBsum" id="8F4E"/>
<dbReference type="PDBsum" id="8F4F"/>
<dbReference type="PDBsum" id="8F4G"/>
<dbReference type="PDBsum" id="8F4H"/>
<dbReference type="PDBsum" id="8F4I"/>
<dbReference type="PDBsum" id="8F4J"/>
<dbReference type="PDBsum" id="8F4K"/>
<dbReference type="PDBsum" id="9EVX"/>
<dbReference type="EMDB" id="EMD-12335"/>
<dbReference type="EMDB" id="EMD-12336"/>
<dbReference type="EMDB" id="EMD-12337"/>
<dbReference type="EMDB" id="EMD-50019"/>
<dbReference type="SMR" id="Q8CM25"/>
<dbReference type="DIP" id="DIP-48490N"/>
<dbReference type="IntAct" id="Q8CM25">
    <property type="interactions" value="1"/>
</dbReference>
<dbReference type="STRING" id="197221.gene:10747044"/>
<dbReference type="EnsemblBacteria" id="BAC08007">
    <property type="protein sequence ID" value="BAC08007"/>
    <property type="gene ID" value="BAC08007"/>
</dbReference>
<dbReference type="EnsemblBacteria" id="BAC09182">
    <property type="protein sequence ID" value="BAC09182"/>
    <property type="gene ID" value="BAC09182"/>
</dbReference>
<dbReference type="KEGG" id="tel:tlr0455"/>
<dbReference type="KEGG" id="tel:tlr1630"/>
<dbReference type="PATRIC" id="fig|197221.4.peg.1710"/>
<dbReference type="eggNOG" id="ENOG502Z8JK">
    <property type="taxonomic scope" value="Bacteria"/>
</dbReference>
<dbReference type="BRENDA" id="1.10.3.9">
    <property type="organism ID" value="7763"/>
</dbReference>
<dbReference type="EvolutionaryTrace" id="Q8CM25"/>
<dbReference type="Proteomes" id="UP000000440">
    <property type="component" value="Chromosome"/>
</dbReference>
<dbReference type="GO" id="GO:0009523">
    <property type="term" value="C:photosystem II"/>
    <property type="evidence" value="ECO:0007669"/>
    <property type="project" value="UniProtKB-KW"/>
</dbReference>
<dbReference type="GO" id="GO:0031676">
    <property type="term" value="C:plasma membrane-derived thylakoid membrane"/>
    <property type="evidence" value="ECO:0007669"/>
    <property type="project" value="UniProtKB-SubCell"/>
</dbReference>
<dbReference type="GO" id="GO:0016168">
    <property type="term" value="F:chlorophyll binding"/>
    <property type="evidence" value="ECO:0007669"/>
    <property type="project" value="UniProtKB-UniRule"/>
</dbReference>
<dbReference type="GO" id="GO:0045156">
    <property type="term" value="F:electron transporter, transferring electrons within the cyclic electron transport pathway of photosynthesis activity"/>
    <property type="evidence" value="ECO:0007669"/>
    <property type="project" value="InterPro"/>
</dbReference>
<dbReference type="GO" id="GO:0005506">
    <property type="term" value="F:iron ion binding"/>
    <property type="evidence" value="ECO:0007669"/>
    <property type="project" value="UniProtKB-UniRule"/>
</dbReference>
<dbReference type="GO" id="GO:0010242">
    <property type="term" value="F:oxygen evolving activity"/>
    <property type="evidence" value="ECO:0007669"/>
    <property type="project" value="UniProtKB-EC"/>
</dbReference>
<dbReference type="GO" id="GO:0009772">
    <property type="term" value="P:photosynthetic electron transport in photosystem II"/>
    <property type="evidence" value="ECO:0007669"/>
    <property type="project" value="InterPro"/>
</dbReference>
<dbReference type="CDD" id="cd09288">
    <property type="entry name" value="Photosystem-II_D2"/>
    <property type="match status" value="1"/>
</dbReference>
<dbReference type="FunFam" id="1.20.85.10:FF:000001">
    <property type="entry name" value="photosystem II D2 protein-like"/>
    <property type="match status" value="1"/>
</dbReference>
<dbReference type="Gene3D" id="1.20.85.10">
    <property type="entry name" value="Photosystem II protein D1-like"/>
    <property type="match status" value="1"/>
</dbReference>
<dbReference type="HAMAP" id="MF_01383">
    <property type="entry name" value="PSII_PsbD_D2"/>
    <property type="match status" value="1"/>
</dbReference>
<dbReference type="InterPro" id="IPR055266">
    <property type="entry name" value="D1/D2"/>
</dbReference>
<dbReference type="InterPro" id="IPR036854">
    <property type="entry name" value="Photo_II_D1/D2_sf"/>
</dbReference>
<dbReference type="InterPro" id="IPR000484">
    <property type="entry name" value="Photo_RC_L/M"/>
</dbReference>
<dbReference type="InterPro" id="IPR055265">
    <property type="entry name" value="Photo_RC_L/M_CS"/>
</dbReference>
<dbReference type="InterPro" id="IPR005868">
    <property type="entry name" value="PSII_PsbD/D2"/>
</dbReference>
<dbReference type="NCBIfam" id="TIGR01152">
    <property type="entry name" value="psbD"/>
    <property type="match status" value="1"/>
</dbReference>
<dbReference type="PANTHER" id="PTHR33149:SF12">
    <property type="entry name" value="PHOTOSYSTEM II D2 PROTEIN"/>
    <property type="match status" value="1"/>
</dbReference>
<dbReference type="PANTHER" id="PTHR33149">
    <property type="entry name" value="PHOTOSYSTEM II PROTEIN D1"/>
    <property type="match status" value="1"/>
</dbReference>
<dbReference type="Pfam" id="PF00124">
    <property type="entry name" value="Photo_RC"/>
    <property type="match status" value="1"/>
</dbReference>
<dbReference type="PRINTS" id="PR00256">
    <property type="entry name" value="REACTNCENTRE"/>
</dbReference>
<dbReference type="SUPFAM" id="SSF81483">
    <property type="entry name" value="Bacterial photosystem II reaction centre, L and M subunits"/>
    <property type="match status" value="1"/>
</dbReference>
<dbReference type="PROSITE" id="PS00244">
    <property type="entry name" value="REACTION_CENTER"/>
    <property type="match status" value="1"/>
</dbReference>
<reference key="1">
    <citation type="journal article" date="2002" name="DNA Res.">
        <title>Complete genome structure of the thermophilic cyanobacterium Thermosynechococcus elongatus BP-1.</title>
        <authorList>
            <person name="Nakamura Y."/>
            <person name="Kaneko T."/>
            <person name="Sato S."/>
            <person name="Ikeuchi M."/>
            <person name="Katoh H."/>
            <person name="Sasamoto S."/>
            <person name="Watanabe A."/>
            <person name="Iriguchi M."/>
            <person name="Kawashima K."/>
            <person name="Kimura T."/>
            <person name="Kishida Y."/>
            <person name="Kiyokawa C."/>
            <person name="Kohara M."/>
            <person name="Matsumoto M."/>
            <person name="Matsuno A."/>
            <person name="Nakazaki N."/>
            <person name="Shimpo S."/>
            <person name="Sugimoto M."/>
            <person name="Takeuchi C."/>
            <person name="Yamada M."/>
            <person name="Tabata S."/>
        </authorList>
    </citation>
    <scope>NUCLEOTIDE SEQUENCE [LARGE SCALE GENOMIC DNA]</scope>
    <source>
        <strain>NIES-2133 / IAM M-273 / BP-1</strain>
    </source>
</reference>
<reference key="2">
    <citation type="journal article" date="2004" name="Phys. Chem. Chem. Phys.">
        <title>Crystal structure of cyanobacterial photosystem II at 3.2 A resolution: a closer look at the Mn-cluster.</title>
        <authorList>
            <person name="Biesiadka J."/>
            <person name="Loll B."/>
            <person name="Kern J."/>
            <person name="Irrgang K.-D."/>
            <person name="Zouni A."/>
        </authorList>
    </citation>
    <scope>X-RAY CRYSTALLOGRAPHY (3.20 ANGSTROMS) IN PHOTOSYSTEM II WITH IRON</scope>
    <scope>COFACTOR</scope>
    <scope>SUBUNIT</scope>
    <scope>SUBCELLULAR LOCATION</scope>
</reference>
<reference key="3">
    <citation type="journal article" date="2004" name="Science">
        <title>Architecture of the photosynthetic oxygen-evolving center.</title>
        <authorList>
            <person name="Ferreira K.N."/>
            <person name="Iverson T.M."/>
            <person name="Maghlaoui K."/>
            <person name="Barber J."/>
            <person name="Iwata S."/>
        </authorList>
    </citation>
    <scope>X-RAY CRYSTALLOGRAPHY (3.50 ANGSTROMS) IN PHOTOSYSTEM II WITH IRON</scope>
    <scope>COFACTOR</scope>
    <scope>SUBUNIT</scope>
    <scope>SUBCELLULAR LOCATION</scope>
</reference>
<reference key="4">
    <citation type="journal article" date="2005" name="Nature">
        <title>Towards complete cofactor arrangement in the 3.0 A resolution structure of photosystem II.</title>
        <authorList>
            <person name="Loll B."/>
            <person name="Kern J."/>
            <person name="Saenger W."/>
            <person name="Zouni A."/>
            <person name="Biesiadka J."/>
        </authorList>
    </citation>
    <scope>X-RAY CRYSTALLOGRAPHY (3.00 ANGSTROMS) IN PHOTOSYSTEM II WITH IRON</scope>
    <scope>COFACTOR</scope>
    <scope>SUBUNIT</scope>
    <scope>SUBCELLULAR LOCATION</scope>
    <source>
        <strain>NIES-2133 / IAM M-273 / BP-1</strain>
    </source>
</reference>
<reference key="5">
    <citation type="journal article" date="2009" name="Nat. Struct. Mol. Biol.">
        <title>Cyanobacterial photosystem II at 2.9-A resolution and the role of quinones, lipids, channels and chloride.</title>
        <authorList>
            <person name="Guskov A."/>
            <person name="Kern J."/>
            <person name="Gabdulkhakov A."/>
            <person name="Broser M."/>
            <person name="Zouni A."/>
            <person name="Saenger W."/>
        </authorList>
    </citation>
    <scope>X-RAY CRYSTALLOGRAPHY (2.90 ANGSTROMS) IN PHOTOSYSTEM II WITH IRON</scope>
    <scope>COFACTOR</scope>
    <scope>SUBUNIT</scope>
    <scope>SUBCELLULAR LOCATION</scope>
    <scope>MASS SPECTROMETRY</scope>
    <source>
        <strain>NIES-2133 / IAM M-273 / BP-1</strain>
    </source>
</reference>
<reference key="6">
    <citation type="journal article" date="2010" name="J. Biol. Chem.">
        <title>Crystal structure of monomeric photosystem II from Thermosynechococcus elongatus at 3.6 A resolution.</title>
        <authorList>
            <person name="Broser M."/>
            <person name="Gabdulkhakov A."/>
            <person name="Kern J."/>
            <person name="Guskov A."/>
            <person name="Muh F."/>
            <person name="Saenger W."/>
            <person name="Zouni A."/>
        </authorList>
    </citation>
    <scope>X-RAY CRYSTALLOGRAPHY (3.60 ANGSTROMS) IN PHOTOSYSTEM II WITH IRON</scope>
    <scope>FUNCTION</scope>
    <scope>CATALYTIC ACTIVITY</scope>
    <scope>COFACTOR</scope>
    <scope>SUBUNIT</scope>
    <scope>SUBCELLULAR LOCATION</scope>
    <source>
        <strain>NIES-2133 / IAM M-273 / BP-1</strain>
    </source>
</reference>
<reference key="7">
    <citation type="journal article" date="2011" name="J. Biol. Chem.">
        <title>Structural basis of cyanobacterial photosystem II inhibition by the herbicide terbutryn.</title>
        <authorList>
            <person name="Broser M."/>
            <person name="Glockner C."/>
            <person name="Gabdulkhakov A."/>
            <person name="Guskov A."/>
            <person name="Buchta J."/>
            <person name="Kern J."/>
            <person name="Muh F."/>
            <person name="Dau H."/>
            <person name="Saenger W."/>
            <person name="Zouni A."/>
        </authorList>
    </citation>
    <scope>X-RAY CRYSTALLOGRAPHY (3.20 ANGSTROMS) IN PHOTOSYSTEM II WITH IRON</scope>
    <scope>FUNCTION</scope>
    <scope>COFACTOR</scope>
    <scope>SUBUNIT</scope>
    <scope>SUBCELLULAR LOCATION</scope>
</reference>
<reference key="8">
    <citation type="journal article" date="2012" name="Proc. Natl. Acad. Sci. U.S.A.">
        <title>Room temperature femtosecond X-ray diffraction of photosystem II microcrystals.</title>
        <authorList>
            <person name="Kern J."/>
            <person name="Alonso-Mori R."/>
            <person name="Hellmich J."/>
            <person name="Tran R."/>
            <person name="Hattne J."/>
            <person name="Laksmono H."/>
            <person name="Glockner C."/>
            <person name="Echols N."/>
            <person name="Sierra R.G."/>
            <person name="Sellberg J."/>
            <person name="Lassalle-Kaiser B."/>
            <person name="Gildea R.J."/>
            <person name="Glatzel P."/>
            <person name="Grosse-Kunstleve R.W."/>
            <person name="Latimer M.J."/>
            <person name="McQueen T.A."/>
            <person name="DiFiore D."/>
            <person name="Fry A.R."/>
            <person name="Messerschmidt M."/>
            <person name="Miahnahri A."/>
            <person name="Schafer D.W."/>
            <person name="Seibert M.M."/>
            <person name="Sokaras D."/>
            <person name="Weng T.C."/>
            <person name="Zwart P.H."/>
            <person name="White W.E."/>
            <person name="Adams P.D."/>
            <person name="Bogan M.J."/>
            <person name="Boutet S."/>
            <person name="Williams G.J."/>
            <person name="Messinger J."/>
            <person name="Sauter N.K."/>
            <person name="Zouni A."/>
            <person name="Bergmann U."/>
            <person name="Yano J."/>
            <person name="Yachandra V.K."/>
        </authorList>
    </citation>
    <scope>X-RAY CRYSTALLOGRAPHY (6.56 ANGSTROMS) IN PHOTOSYSTEM II</scope>
    <scope>COFACTOR</scope>
    <scope>SUBUNIT</scope>
    <scope>SUBCELLULAR LOCATION</scope>
    <source>
        <strain>NIES-2133 / IAM M-273 / BP-1</strain>
    </source>
</reference>
<reference key="9">
    <citation type="journal article" date="2013" name="Science">
        <title>Simultaneous femtosecond X-ray spectroscopy and diffraction of photosystem II at room temperature.</title>
        <authorList>
            <person name="Kern J."/>
            <person name="Alonso-Mori R."/>
            <person name="Tran R."/>
            <person name="Hattne J."/>
            <person name="Gildea R.J."/>
            <person name="Echols N."/>
            <person name="Glockner C."/>
            <person name="Hellmich J."/>
            <person name="Laksmono H."/>
            <person name="Sierra R.G."/>
            <person name="Lassalle-Kaiser B."/>
            <person name="Koroidov S."/>
            <person name="Lampe A."/>
            <person name="Han G."/>
            <person name="Gul S."/>
            <person name="Difiore D."/>
            <person name="Milathianaki D."/>
            <person name="Fry A.R."/>
            <person name="Miahnahri A."/>
            <person name="Schafer D.W."/>
            <person name="Messerschmidt M."/>
            <person name="Seibert M.M."/>
            <person name="Koglin J.E."/>
            <person name="Sokaras D."/>
            <person name="Weng T.C."/>
            <person name="Sellberg J."/>
            <person name="Latimer M.J."/>
            <person name="Grosse-Kunstleve R.W."/>
            <person name="Zwart P.H."/>
            <person name="White W.E."/>
            <person name="Glatzel P."/>
            <person name="Adams P.D."/>
            <person name="Bogan M.J."/>
            <person name="Williams G.J."/>
            <person name="Boutet S."/>
            <person name="Messinger J."/>
            <person name="Zouni A."/>
            <person name="Sauter N.K."/>
            <person name="Yachandra V.K."/>
            <person name="Bergmann U."/>
            <person name="Yano J."/>
        </authorList>
    </citation>
    <scope>X-RAY CRYSTALLOGRAPHY (5.70 ANGSTROMS) IN PHOTOSYSTEM II</scope>
    <scope>COFACTOR</scope>
    <scope>SUBUNIT</scope>
    <scope>SUBCELLULAR LOCATION</scope>
    <source>
        <strain>NIES-2133 / IAM M-273 / BP-1</strain>
    </source>
</reference>
<reference key="10">
    <citation type="journal article" date="2014" name="Nature">
        <title>Serial time-resolved crystallography of photosystem II using a femtosecond X-ray laser.</title>
        <authorList>
            <person name="Kupitz C."/>
            <person name="Basu S."/>
            <person name="Grotjohann I."/>
            <person name="Fromme R."/>
            <person name="Zatsepin N.A."/>
            <person name="Rendek K.N."/>
            <person name="Hunter M.S."/>
            <person name="Shoeman R.L."/>
            <person name="White T.A."/>
            <person name="Wang D."/>
            <person name="James D."/>
            <person name="Yang J.H."/>
            <person name="Cobb D.E."/>
            <person name="Reeder B."/>
            <person name="Sierra R.G."/>
            <person name="Liu H."/>
            <person name="Barty A."/>
            <person name="Aquila A.L."/>
            <person name="Deponte D."/>
            <person name="Kirian R.A."/>
            <person name="Bari S."/>
            <person name="Bergkamp J.J."/>
            <person name="Beyerlein K.R."/>
            <person name="Bogan M.J."/>
            <person name="Caleman C."/>
            <person name="Chao T.C."/>
            <person name="Conrad C.E."/>
            <person name="Davis K.M."/>
            <person name="Fleckenstein H."/>
            <person name="Galli L."/>
            <person name="Hau-Riege S.P."/>
            <person name="Kassemeyer S."/>
            <person name="Laksmono H."/>
            <person name="Liang M."/>
            <person name="Lomb L."/>
            <person name="Marchesini S."/>
            <person name="Martin A.V."/>
            <person name="Messerschmidt M."/>
            <person name="Milathianaki D."/>
            <person name="Nass K."/>
            <person name="Ros A."/>
            <person name="Roy-Chowdhury S."/>
            <person name="Schmidt K."/>
            <person name="Seibert M."/>
            <person name="Steinbrener J."/>
            <person name="Stellato F."/>
            <person name="Yan L."/>
            <person name="Yoon C."/>
            <person name="Moore T.A."/>
            <person name="Moore A.L."/>
            <person name="Pushkar Y."/>
            <person name="Williams G.J."/>
            <person name="Boutet S."/>
            <person name="Doak R.B."/>
            <person name="Weierstall U."/>
            <person name="Frank M."/>
            <person name="Chapman H.N."/>
            <person name="Spence J.C."/>
            <person name="Fromme P."/>
        </authorList>
    </citation>
    <scope>X-RAY CRYSTALLOGRAPHY (5.00 ANGSTROMS) OF 11-352 IN PHOTOSYSTEM II</scope>
    <scope>COFACTOR</scope>
    <scope>SUBUNIT</scope>
    <scope>SUBCELLULAR LOCATION</scope>
    <source>
        <strain>NIES-2133 / IAM M-273 / BP-1</strain>
    </source>
</reference>
<reference key="11">
    <citation type="journal article" date="2014" name="Nat. Commun.">
        <title>Taking snapshots of photosynthetic water oxidation using femtosecond X-ray diffraction and spectroscopy.</title>
        <authorList>
            <person name="Kern J."/>
            <person name="Tran R."/>
            <person name="Alonso-Mori R."/>
            <person name="Koroidov S."/>
            <person name="Echols N."/>
            <person name="Hattne J."/>
            <person name="Ibrahim M."/>
            <person name="Gul S."/>
            <person name="Laksmono H."/>
            <person name="Sierra R.G."/>
            <person name="Gildea R.J."/>
            <person name="Han G."/>
            <person name="Hellmich J."/>
            <person name="Lassalle-Kaiser B."/>
            <person name="Chatterjee R."/>
            <person name="Brewster A.S."/>
            <person name="Stan C.A."/>
            <person name="Gloeckner C."/>
            <person name="Lampe A."/>
            <person name="DiFiore D."/>
            <person name="Milathianaki D."/>
            <person name="Fry A.R."/>
            <person name="Seibert M.M."/>
            <person name="Koglin J.E."/>
            <person name="Gallo E."/>
            <person name="Uhlig J."/>
            <person name="Sokaras D."/>
            <person name="Weng T.C."/>
            <person name="Zwart P.H."/>
            <person name="Skinner D.E."/>
            <person name="Bogan M.J."/>
            <person name="Messerschmidt M."/>
            <person name="Glatzel P."/>
            <person name="Williams G.J."/>
            <person name="Boutet S."/>
            <person name="Adams P.D."/>
            <person name="Zouni A."/>
            <person name="Messinger J."/>
            <person name="Sauter N.K."/>
            <person name="Bergmann U."/>
            <person name="Yano J."/>
            <person name="Yachandra V.K."/>
        </authorList>
    </citation>
    <scope>X-RAY CRYSTALLOGRAPHY (4.50 ANGSTROMS) IN PHOTOSYSTEM II</scope>
    <scope>FUNCTION</scope>
    <scope>CATALYTIC ACTIVITY</scope>
    <scope>COFACTOR</scope>
    <scope>SUBUNIT</scope>
    <scope>SUBCELLULAR LOCATION</scope>
    <source>
        <strain>NIES-2133 / IAM M-273 / BP-1</strain>
    </source>
</reference>
<reference evidence="21 22 23" key="12">
    <citation type="journal article" date="2021" name="Nat. Plants">
        <title>Structural insights into photosystem II assembly.</title>
        <authorList>
            <person name="Zabret J."/>
            <person name="Bohn S."/>
            <person name="Schuller S.K."/>
            <person name="Arnolds O."/>
            <person name="Moller M."/>
            <person name="Meier-Credo J."/>
            <person name="Liauw P."/>
            <person name="Chan A."/>
            <person name="Tajkhorshid E."/>
            <person name="Langer J.D."/>
            <person name="Stoll R."/>
            <person name="Krieger-Liszkay A."/>
            <person name="Engel B.D."/>
            <person name="Rudack T."/>
            <person name="Schuller J.M."/>
            <person name="Nowaczyk M.M."/>
        </authorList>
    </citation>
    <scope>STRUCTURE BY ELECTRON MICROSCOPY (2.68 ANGSTROMS) IN PSII-I ASSEMBLY COMPLEX</scope>
    <scope>SUBUNIT</scope>
    <scope>SUBCELLULAR LOCATION</scope>
    <scope>TOPOLOGY</scope>
    <source>
        <strain>NIES-2133 / IAM M-273 / BP-1</strain>
    </source>
</reference>